<proteinExistence type="inferred from homology"/>
<evidence type="ECO:0000255" key="1">
    <source>
        <dbReference type="HAMAP-Rule" id="MF_00185"/>
    </source>
</evidence>
<gene>
    <name evidence="1" type="primary">miaA</name>
    <name type="ordered locus">ECS88_4757</name>
</gene>
<name>MIAA_ECO45</name>
<sequence length="316" mass="35064">MSDISKASLPKAIFLMGPTASGKTALAIELRKILPVELISVDSALIYKGMDIGTAKPNAEELLAAPHRLLNIRDPSQAYSAADFRRDALAEMADITAAGRIPLLVGGTMLYFKALLEGLSPLPSADPEVRARIEQQAAEQGWESLHRQLQEVDPVAAARIHPNDPQRLSRALEVFFISGKTLTELTQTSGDALPYQVHQFAIAPASRELLHQRIEQRFHQMLASGFEAEVRALFARGDLHTDLPSIRCVGYRQMWSYLEGEISYDEMVYRGVCATRQLAKRQITWLRGWEGVHWLDSEKPEQARDEVLQVVGAIAG</sequence>
<dbReference type="EC" id="2.5.1.75" evidence="1"/>
<dbReference type="EMBL" id="CU928161">
    <property type="protein sequence ID" value="CAR05906.1"/>
    <property type="molecule type" value="Genomic_DNA"/>
</dbReference>
<dbReference type="RefSeq" id="WP_001280359.1">
    <property type="nucleotide sequence ID" value="NC_011742.1"/>
</dbReference>
<dbReference type="SMR" id="B7MKX5"/>
<dbReference type="KEGG" id="ecz:ECS88_4757"/>
<dbReference type="HOGENOM" id="CLU_032616_0_0_6"/>
<dbReference type="Proteomes" id="UP000000747">
    <property type="component" value="Chromosome"/>
</dbReference>
<dbReference type="GO" id="GO:0005524">
    <property type="term" value="F:ATP binding"/>
    <property type="evidence" value="ECO:0007669"/>
    <property type="project" value="UniProtKB-UniRule"/>
</dbReference>
<dbReference type="GO" id="GO:0052381">
    <property type="term" value="F:tRNA dimethylallyltransferase activity"/>
    <property type="evidence" value="ECO:0007669"/>
    <property type="project" value="UniProtKB-UniRule"/>
</dbReference>
<dbReference type="GO" id="GO:0006400">
    <property type="term" value="P:tRNA modification"/>
    <property type="evidence" value="ECO:0007669"/>
    <property type="project" value="TreeGrafter"/>
</dbReference>
<dbReference type="FunFam" id="1.10.20.140:FF:000001">
    <property type="entry name" value="tRNA dimethylallyltransferase"/>
    <property type="match status" value="1"/>
</dbReference>
<dbReference type="FunFam" id="1.10.287.890:FF:000001">
    <property type="entry name" value="tRNA dimethylallyltransferase"/>
    <property type="match status" value="1"/>
</dbReference>
<dbReference type="Gene3D" id="1.10.20.140">
    <property type="match status" value="1"/>
</dbReference>
<dbReference type="Gene3D" id="1.10.287.890">
    <property type="entry name" value="Crystal structure of tRNA isopentenylpyrophosphate transferase (bh2366) domain"/>
    <property type="match status" value="1"/>
</dbReference>
<dbReference type="Gene3D" id="3.40.50.300">
    <property type="entry name" value="P-loop containing nucleotide triphosphate hydrolases"/>
    <property type="match status" value="1"/>
</dbReference>
<dbReference type="HAMAP" id="MF_00185">
    <property type="entry name" value="IPP_trans"/>
    <property type="match status" value="1"/>
</dbReference>
<dbReference type="InterPro" id="IPR039657">
    <property type="entry name" value="Dimethylallyltransferase"/>
</dbReference>
<dbReference type="InterPro" id="IPR018022">
    <property type="entry name" value="IPT"/>
</dbReference>
<dbReference type="InterPro" id="IPR027417">
    <property type="entry name" value="P-loop_NTPase"/>
</dbReference>
<dbReference type="NCBIfam" id="TIGR00174">
    <property type="entry name" value="miaA"/>
    <property type="match status" value="1"/>
</dbReference>
<dbReference type="PANTHER" id="PTHR11088">
    <property type="entry name" value="TRNA DIMETHYLALLYLTRANSFERASE"/>
    <property type="match status" value="1"/>
</dbReference>
<dbReference type="PANTHER" id="PTHR11088:SF60">
    <property type="entry name" value="TRNA DIMETHYLALLYLTRANSFERASE"/>
    <property type="match status" value="1"/>
</dbReference>
<dbReference type="Pfam" id="PF01715">
    <property type="entry name" value="IPPT"/>
    <property type="match status" value="1"/>
</dbReference>
<dbReference type="SUPFAM" id="SSF52540">
    <property type="entry name" value="P-loop containing nucleoside triphosphate hydrolases"/>
    <property type="match status" value="1"/>
</dbReference>
<accession>B7MKX5</accession>
<organism>
    <name type="scientific">Escherichia coli O45:K1 (strain S88 / ExPEC)</name>
    <dbReference type="NCBI Taxonomy" id="585035"/>
    <lineage>
        <taxon>Bacteria</taxon>
        <taxon>Pseudomonadati</taxon>
        <taxon>Pseudomonadota</taxon>
        <taxon>Gammaproteobacteria</taxon>
        <taxon>Enterobacterales</taxon>
        <taxon>Enterobacteriaceae</taxon>
        <taxon>Escherichia</taxon>
    </lineage>
</organism>
<reference key="1">
    <citation type="journal article" date="2009" name="PLoS Genet.">
        <title>Organised genome dynamics in the Escherichia coli species results in highly diverse adaptive paths.</title>
        <authorList>
            <person name="Touchon M."/>
            <person name="Hoede C."/>
            <person name="Tenaillon O."/>
            <person name="Barbe V."/>
            <person name="Baeriswyl S."/>
            <person name="Bidet P."/>
            <person name="Bingen E."/>
            <person name="Bonacorsi S."/>
            <person name="Bouchier C."/>
            <person name="Bouvet O."/>
            <person name="Calteau A."/>
            <person name="Chiapello H."/>
            <person name="Clermont O."/>
            <person name="Cruveiller S."/>
            <person name="Danchin A."/>
            <person name="Diard M."/>
            <person name="Dossat C."/>
            <person name="Karoui M.E."/>
            <person name="Frapy E."/>
            <person name="Garry L."/>
            <person name="Ghigo J.M."/>
            <person name="Gilles A.M."/>
            <person name="Johnson J."/>
            <person name="Le Bouguenec C."/>
            <person name="Lescat M."/>
            <person name="Mangenot S."/>
            <person name="Martinez-Jehanne V."/>
            <person name="Matic I."/>
            <person name="Nassif X."/>
            <person name="Oztas S."/>
            <person name="Petit M.A."/>
            <person name="Pichon C."/>
            <person name="Rouy Z."/>
            <person name="Ruf C.S."/>
            <person name="Schneider D."/>
            <person name="Tourret J."/>
            <person name="Vacherie B."/>
            <person name="Vallenet D."/>
            <person name="Medigue C."/>
            <person name="Rocha E.P.C."/>
            <person name="Denamur E."/>
        </authorList>
    </citation>
    <scope>NUCLEOTIDE SEQUENCE [LARGE SCALE GENOMIC DNA]</scope>
    <source>
        <strain>S88 / ExPEC</strain>
    </source>
</reference>
<keyword id="KW-0067">ATP-binding</keyword>
<keyword id="KW-0460">Magnesium</keyword>
<keyword id="KW-0547">Nucleotide-binding</keyword>
<keyword id="KW-1185">Reference proteome</keyword>
<keyword id="KW-0808">Transferase</keyword>
<keyword id="KW-0819">tRNA processing</keyword>
<comment type="function">
    <text evidence="1">Catalyzes the transfer of a dimethylallyl group onto the adenine at position 37 in tRNAs that read codons beginning with uridine, leading to the formation of N6-(dimethylallyl)adenosine (i(6)A).</text>
</comment>
<comment type="catalytic activity">
    <reaction evidence="1">
        <text>adenosine(37) in tRNA + dimethylallyl diphosphate = N(6)-dimethylallyladenosine(37) in tRNA + diphosphate</text>
        <dbReference type="Rhea" id="RHEA:26482"/>
        <dbReference type="Rhea" id="RHEA-COMP:10162"/>
        <dbReference type="Rhea" id="RHEA-COMP:10375"/>
        <dbReference type="ChEBI" id="CHEBI:33019"/>
        <dbReference type="ChEBI" id="CHEBI:57623"/>
        <dbReference type="ChEBI" id="CHEBI:74411"/>
        <dbReference type="ChEBI" id="CHEBI:74415"/>
        <dbReference type="EC" id="2.5.1.75"/>
    </reaction>
</comment>
<comment type="cofactor">
    <cofactor evidence="1">
        <name>Mg(2+)</name>
        <dbReference type="ChEBI" id="CHEBI:18420"/>
    </cofactor>
</comment>
<comment type="subunit">
    <text evidence="1">Monomer.</text>
</comment>
<comment type="similarity">
    <text evidence="1">Belongs to the IPP transferase family.</text>
</comment>
<feature type="chain" id="PRO_1000118524" description="tRNA dimethylallyltransferase">
    <location>
        <begin position="1"/>
        <end position="316"/>
    </location>
</feature>
<feature type="region of interest" description="Interaction with substrate tRNA" evidence="1">
    <location>
        <begin position="42"/>
        <end position="45"/>
    </location>
</feature>
<feature type="region of interest" description="Interaction with substrate tRNA" evidence="1">
    <location>
        <begin position="166"/>
        <end position="170"/>
    </location>
</feature>
<feature type="region of interest" description="Interaction with substrate tRNA" evidence="1">
    <location>
        <begin position="247"/>
        <end position="252"/>
    </location>
</feature>
<feature type="region of interest" description="Interaction with substrate tRNA" evidence="1">
    <location>
        <begin position="280"/>
        <end position="287"/>
    </location>
</feature>
<feature type="binding site" evidence="1">
    <location>
        <begin position="17"/>
        <end position="24"/>
    </location>
    <ligand>
        <name>ATP</name>
        <dbReference type="ChEBI" id="CHEBI:30616"/>
    </ligand>
</feature>
<feature type="binding site" evidence="1">
    <location>
        <begin position="19"/>
        <end position="24"/>
    </location>
    <ligand>
        <name>substrate</name>
    </ligand>
</feature>
<feature type="site" description="Interaction with substrate tRNA" evidence="1">
    <location>
        <position position="108"/>
    </location>
</feature>
<feature type="site" description="Interaction with substrate tRNA" evidence="1">
    <location>
        <position position="130"/>
    </location>
</feature>
<protein>
    <recommendedName>
        <fullName evidence="1">tRNA dimethylallyltransferase</fullName>
        <ecNumber evidence="1">2.5.1.75</ecNumber>
    </recommendedName>
    <alternativeName>
        <fullName evidence="1">Dimethylallyl diphosphate:tRNA dimethylallyltransferase</fullName>
        <shortName evidence="1">DMAPP:tRNA dimethylallyltransferase</shortName>
        <shortName evidence="1">DMATase</shortName>
    </alternativeName>
    <alternativeName>
        <fullName evidence="1">Isopentenyl-diphosphate:tRNA isopentenyltransferase</fullName>
        <shortName evidence="1">IPP transferase</shortName>
        <shortName evidence="1">IPPT</shortName>
        <shortName evidence="1">IPTase</shortName>
    </alternativeName>
</protein>